<feature type="chain" id="PRO_0000104948" description="DNA-binding protein HupB">
    <location>
        <begin position="1"/>
        <end position="200"/>
    </location>
</feature>
<feature type="region of interest" description="Bacterial histone-like domain">
    <location>
        <begin position="1"/>
        <end position="90"/>
    </location>
</feature>
<feature type="region of interest" description="Degenerate repeats region">
    <location>
        <begin position="101"/>
        <end position="200"/>
    </location>
</feature>
<feature type="region of interest" description="Disordered" evidence="4">
    <location>
        <begin position="179"/>
        <end position="200"/>
    </location>
</feature>
<feature type="modified residue" description="N6-acetyllysine" evidence="1">
    <location>
        <position position="3"/>
    </location>
</feature>
<feature type="modified residue" description="N6-acetyllysine" evidence="1">
    <location>
        <position position="72"/>
    </location>
</feature>
<feature type="modified residue" description="N6-acetyllysine" evidence="1">
    <location>
        <position position="86"/>
    </location>
</feature>
<feature type="modified residue" description="N6-acetyllysine" evidence="1">
    <location>
        <position position="103"/>
    </location>
</feature>
<feature type="modified residue" description="N6-acetyllysine" evidence="1">
    <location>
        <position position="137"/>
    </location>
</feature>
<feature type="modified residue" description="N6-acetyllysine" evidence="1">
    <location>
        <position position="144"/>
    </location>
</feature>
<feature type="modified residue" description="N6-acetyllysine" evidence="1">
    <location>
        <position position="156"/>
    </location>
</feature>
<proteinExistence type="evidence at protein level"/>
<dbReference type="EC" id="1.16.3.1" evidence="6"/>
<dbReference type="EMBL" id="AB022517">
    <property type="protein sequence ID" value="BAA84958.1"/>
    <property type="molecule type" value="Genomic_DNA"/>
</dbReference>
<dbReference type="EMBL" id="Z99263">
    <property type="protein sequence ID" value="CAB16449.1"/>
    <property type="molecule type" value="Genomic_DNA"/>
</dbReference>
<dbReference type="EMBL" id="AL583923">
    <property type="protein sequence ID" value="CAC30636.1"/>
    <property type="molecule type" value="Genomic_DNA"/>
</dbReference>
<dbReference type="PIR" id="T45427">
    <property type="entry name" value="T45427"/>
</dbReference>
<dbReference type="RefSeq" id="NP_302157.1">
    <property type="nucleotide sequence ID" value="NC_002677.1"/>
</dbReference>
<dbReference type="RefSeq" id="WP_010908478.1">
    <property type="nucleotide sequence ID" value="NC_002677.1"/>
</dbReference>
<dbReference type="SMR" id="O33125"/>
<dbReference type="STRING" id="272631.gene:17575526"/>
<dbReference type="KEGG" id="mle:ML1683"/>
<dbReference type="PATRIC" id="fig|272631.5.peg.3175"/>
<dbReference type="Leproma" id="ML1683"/>
<dbReference type="eggNOG" id="COG0776">
    <property type="taxonomic scope" value="Bacteria"/>
</dbReference>
<dbReference type="HOGENOM" id="CLU_085366_0_0_11"/>
<dbReference type="OrthoDB" id="9799835at2"/>
<dbReference type="Proteomes" id="UP000000806">
    <property type="component" value="Chromosome"/>
</dbReference>
<dbReference type="GO" id="GO:0009986">
    <property type="term" value="C:cell surface"/>
    <property type="evidence" value="ECO:0007669"/>
    <property type="project" value="UniProtKB-SubCell"/>
</dbReference>
<dbReference type="GO" id="GO:0005829">
    <property type="term" value="C:cytosol"/>
    <property type="evidence" value="ECO:0007669"/>
    <property type="project" value="TreeGrafter"/>
</dbReference>
<dbReference type="GO" id="GO:0005576">
    <property type="term" value="C:extracellular region"/>
    <property type="evidence" value="ECO:0007669"/>
    <property type="project" value="UniProtKB-KW"/>
</dbReference>
<dbReference type="GO" id="GO:0009295">
    <property type="term" value="C:nucleoid"/>
    <property type="evidence" value="ECO:0007669"/>
    <property type="project" value="UniProtKB-SubCell"/>
</dbReference>
<dbReference type="GO" id="GO:0003677">
    <property type="term" value="F:DNA binding"/>
    <property type="evidence" value="ECO:0007669"/>
    <property type="project" value="UniProtKB-KW"/>
</dbReference>
<dbReference type="GO" id="GO:0008199">
    <property type="term" value="F:ferric iron binding"/>
    <property type="evidence" value="ECO:0000314"/>
    <property type="project" value="UniProtKB"/>
</dbReference>
<dbReference type="GO" id="GO:0004322">
    <property type="term" value="F:ferroxidase activity"/>
    <property type="evidence" value="ECO:0000314"/>
    <property type="project" value="UniProtKB"/>
</dbReference>
<dbReference type="GO" id="GO:0030527">
    <property type="term" value="F:structural constituent of chromatin"/>
    <property type="evidence" value="ECO:0007669"/>
    <property type="project" value="InterPro"/>
</dbReference>
<dbReference type="GO" id="GO:0030261">
    <property type="term" value="P:chromosome condensation"/>
    <property type="evidence" value="ECO:0007669"/>
    <property type="project" value="UniProtKB-KW"/>
</dbReference>
<dbReference type="CDD" id="cd13831">
    <property type="entry name" value="HU"/>
    <property type="match status" value="1"/>
</dbReference>
<dbReference type="FunFam" id="4.10.520.10:FF:000006">
    <property type="entry name" value="DNA-binding protein HU"/>
    <property type="match status" value="1"/>
</dbReference>
<dbReference type="Gene3D" id="4.10.520.10">
    <property type="entry name" value="IHF-like DNA-binding proteins"/>
    <property type="match status" value="1"/>
</dbReference>
<dbReference type="InterPro" id="IPR000119">
    <property type="entry name" value="Hist_DNA-bd"/>
</dbReference>
<dbReference type="InterPro" id="IPR020816">
    <property type="entry name" value="Histone-like_DNA-bd_CS"/>
</dbReference>
<dbReference type="InterPro" id="IPR010992">
    <property type="entry name" value="IHF-like_DNA-bd_dom_sf"/>
</dbReference>
<dbReference type="PANTHER" id="PTHR33175">
    <property type="entry name" value="DNA-BINDING PROTEIN HU"/>
    <property type="match status" value="1"/>
</dbReference>
<dbReference type="PANTHER" id="PTHR33175:SF3">
    <property type="entry name" value="DNA-BINDING PROTEIN HU-BETA"/>
    <property type="match status" value="1"/>
</dbReference>
<dbReference type="Pfam" id="PF00216">
    <property type="entry name" value="Bac_DNA_binding"/>
    <property type="match status" value="1"/>
</dbReference>
<dbReference type="PRINTS" id="PR01727">
    <property type="entry name" value="DNABINDINGHU"/>
</dbReference>
<dbReference type="SMART" id="SM00411">
    <property type="entry name" value="BHL"/>
    <property type="match status" value="1"/>
</dbReference>
<dbReference type="SUPFAM" id="SSF47729">
    <property type="entry name" value="IHF-like DNA-binding proteins"/>
    <property type="match status" value="1"/>
</dbReference>
<dbReference type="PROSITE" id="PS00045">
    <property type="entry name" value="HISTONE_LIKE"/>
    <property type="match status" value="1"/>
</dbReference>
<gene>
    <name evidence="8" type="primary">hupB</name>
    <name type="synonym">hlp</name>
    <name evidence="7" type="synonym">lbp21</name>
    <name evidence="12" type="ordered locus">ML1683</name>
    <name evidence="11" type="ORF">MLCB637.34</name>
</gene>
<protein>
    <recommendedName>
        <fullName evidence="8">DNA-binding protein HupB</fullName>
        <shortName evidence="8">HupB</shortName>
        <ecNumber evidence="6">1.16.3.1</ecNumber>
    </recommendedName>
    <alternativeName>
        <fullName evidence="7">21 kDa laminin-2-binding protein</fullName>
        <shortName evidence="7">ML-LBP21</shortName>
    </alternativeName>
    <alternativeName>
        <fullName>DNA-binding protein HU homolog</fullName>
    </alternativeName>
    <alternativeName>
        <fullName>Histone-like protein</fullName>
        <shortName>Hlp</shortName>
    </alternativeName>
</protein>
<organism>
    <name type="scientific">Mycobacterium leprae (strain TN)</name>
    <dbReference type="NCBI Taxonomy" id="272631"/>
    <lineage>
        <taxon>Bacteria</taxon>
        <taxon>Bacillati</taxon>
        <taxon>Actinomycetota</taxon>
        <taxon>Actinomycetes</taxon>
        <taxon>Mycobacteriales</taxon>
        <taxon>Mycobacteriaceae</taxon>
        <taxon>Mycobacterium</taxon>
    </lineage>
</organism>
<accession>O33125</accession>
<evidence type="ECO:0000250" key="1">
    <source>
        <dbReference type="UniProtKB" id="A5U6Z7"/>
    </source>
</evidence>
<evidence type="ECO:0000250" key="2">
    <source>
        <dbReference type="UniProtKB" id="P9WMK7"/>
    </source>
</evidence>
<evidence type="ECO:0000250" key="3">
    <source>
        <dbReference type="UniProtKB" id="Q9ZHC5"/>
    </source>
</evidence>
<evidence type="ECO:0000256" key="4">
    <source>
        <dbReference type="SAM" id="MobiDB-lite"/>
    </source>
</evidence>
<evidence type="ECO:0000269" key="5">
    <source>
    </source>
</evidence>
<evidence type="ECO:0000269" key="6">
    <source>
    </source>
</evidence>
<evidence type="ECO:0000303" key="7">
    <source>
    </source>
</evidence>
<evidence type="ECO:0000305" key="8"/>
<evidence type="ECO:0000305" key="9">
    <source>
    </source>
</evidence>
<evidence type="ECO:0000312" key="10">
    <source>
        <dbReference type="EMBL" id="BAA84958.1"/>
    </source>
</evidence>
<evidence type="ECO:0000312" key="11">
    <source>
        <dbReference type="EMBL" id="CAB16449.1"/>
    </source>
</evidence>
<evidence type="ECO:0000312" key="12">
    <source>
        <dbReference type="EMBL" id="CAC30636.1"/>
    </source>
</evidence>
<comment type="function">
    <text evidence="2 3">A nucleoid-associated protein (NAP) that plays a role in local chromosome architecture and chromosome compactation. Required for biofilm formation, stress survival and possibly in cell wall assembly, probably influences transcription (By similarity). RNase E and HupB jointly contribute to cellular adaptation to changing growth conditions and survival during antibiotic treatment and in the host (By similarity).</text>
</comment>
<comment type="function">
    <text evidence="6">Binds Fe(3+) but not Fe(2+). Has ferroxidase activity, converts Fe(2+) into Fe(3+) and in the presence of H(2)O(2) prevents the generation of hydroxyl radicals (the Fenton reaction). Protects DNA from damage in the presence of FeSO(4) and H(2)O(2). May function in iron storage.</text>
</comment>
<comment type="function">
    <text evidence="9">May be involved in entry into human Schwann cells.</text>
</comment>
<comment type="catalytic activity">
    <reaction evidence="6">
        <text>4 Fe(2+) + O2 + 4 H(+) = 4 Fe(3+) + 2 H2O</text>
        <dbReference type="Rhea" id="RHEA:11148"/>
        <dbReference type="ChEBI" id="CHEBI:15377"/>
        <dbReference type="ChEBI" id="CHEBI:15378"/>
        <dbReference type="ChEBI" id="CHEBI:15379"/>
        <dbReference type="ChEBI" id="CHEBI:29033"/>
        <dbReference type="ChEBI" id="CHEBI:29034"/>
        <dbReference type="EC" id="1.16.3.1"/>
    </reaction>
    <physiologicalReaction direction="left-to-right" evidence="6">
        <dbReference type="Rhea" id="RHEA:11149"/>
    </physiologicalReaction>
</comment>
<comment type="biophysicochemical properties">
    <kinetics>
        <KM evidence="6">0.129 mM for Fe(2+)</KM>
    </kinetics>
</comment>
<comment type="subunit">
    <text evidence="5">Binds to human laminin-2.</text>
</comment>
<comment type="subcellular location">
    <subcellularLocation>
        <location evidence="3">Cytoplasm</location>
        <location evidence="3">Nucleoid</location>
    </subcellularLocation>
    <subcellularLocation>
        <location evidence="5">Secreted</location>
        <location evidence="5">Cell wall</location>
    </subcellularLocation>
    <subcellularLocation>
        <location evidence="5">Cell surface</location>
    </subcellularLocation>
</comment>
<comment type="PTM">
    <text evidence="1 2">May also be methylated and possibly phosphorylated in vivo.</text>
</comment>
<comment type="similarity">
    <text evidence="8">Belongs to the bacterial histone-like protein family. Long actinobacterial subfamily.</text>
</comment>
<keyword id="KW-0007">Acetylation</keyword>
<keyword id="KW-0134">Cell wall</keyword>
<keyword id="KW-0963">Cytoplasm</keyword>
<keyword id="KW-0903">Direct protein sequencing</keyword>
<keyword id="KW-0226">DNA condensation</keyword>
<keyword id="KW-0238">DNA-binding</keyword>
<keyword id="KW-0408">Iron</keyword>
<keyword id="KW-0560">Oxidoreductase</keyword>
<keyword id="KW-1185">Reference proteome</keyword>
<keyword id="KW-0677">Repeat</keyword>
<keyword id="KW-0964">Secreted</keyword>
<keyword id="KW-0804">Transcription</keyword>
<keyword id="KW-0805">Transcription regulation</keyword>
<sequence length="200" mass="20970">MNKAELIDVLTQKLGSDRRQATAAVENVVDTIVRAVHKGDSVTITGFGVFEQRRRAARVARNPRTGETVKVKPTSVPAFRPGAQFKAVVAGAQRLPLEGPAVKRGVATSAAKKAAIKKAPVKKALAKKAATKAPAKKAVKAPAKKITTAVKVPAKKATKVVKKVAAKAPVRKATTRALAKKAAVKKAPAKKVTAAKRGRK</sequence>
<name>DBH_MYCLE</name>
<reference evidence="10" key="1">
    <citation type="journal article" date="1999" name="Proc. Natl. Acad. Sci. U.S.A.">
        <title>A 21-kDa surface protein of Mycobacterium leprae binds peripheral nerve laminin-2 and mediates Schwann cell invasion.</title>
        <authorList>
            <person name="Shimoji Y."/>
            <person name="Ng V."/>
            <person name="Matsumura K."/>
            <person name="Fischetti V.A."/>
            <person name="Rambukkana A."/>
        </authorList>
    </citation>
    <scope>NUCLEOTIDE SEQUENCE [GENOMIC DNA]</scope>
    <scope>PROTEIN SEQUENCE OF 3-15</scope>
    <scope>SUBUNIT</scope>
    <scope>SUBCELLULAR LOCATION</scope>
</reference>
<reference evidence="12" key="2">
    <citation type="journal article" date="2001" name="Nature">
        <title>Massive gene decay in the leprosy bacillus.</title>
        <authorList>
            <person name="Cole S.T."/>
            <person name="Eiglmeier K."/>
            <person name="Parkhill J."/>
            <person name="James K.D."/>
            <person name="Thomson N.R."/>
            <person name="Wheeler P.R."/>
            <person name="Honore N."/>
            <person name="Garnier T."/>
            <person name="Churcher C.M."/>
            <person name="Harris D.E."/>
            <person name="Mungall K.L."/>
            <person name="Basham D."/>
            <person name="Brown D."/>
            <person name="Chillingworth T."/>
            <person name="Connor R."/>
            <person name="Davies R.M."/>
            <person name="Devlin K."/>
            <person name="Duthoy S."/>
            <person name="Feltwell T."/>
            <person name="Fraser A."/>
            <person name="Hamlin N."/>
            <person name="Holroyd S."/>
            <person name="Hornsby T."/>
            <person name="Jagels K."/>
            <person name="Lacroix C."/>
            <person name="Maclean J."/>
            <person name="Moule S."/>
            <person name="Murphy L.D."/>
            <person name="Oliver K."/>
            <person name="Quail M.A."/>
            <person name="Rajandream M.A."/>
            <person name="Rutherford K.M."/>
            <person name="Rutter S."/>
            <person name="Seeger K."/>
            <person name="Simon S."/>
            <person name="Simmonds M."/>
            <person name="Skelton J."/>
            <person name="Squares R."/>
            <person name="Squares S."/>
            <person name="Stevens K."/>
            <person name="Taylor K."/>
            <person name="Whitehead S."/>
            <person name="Woodward J.R."/>
            <person name="Barrell B.G."/>
        </authorList>
    </citation>
    <scope>NUCLEOTIDE SEQUENCE [LARGE SCALE GENOMIC DNA]</scope>
    <source>
        <strain>TN</strain>
    </source>
</reference>
<reference key="3">
    <citation type="journal article" date="2011" name="PLoS ONE">
        <title>A histone-like protein of mycobacteria possesses ferritin superfamily protein-like activity and protects against DNA damage by Fenton reaction.</title>
        <authorList>
            <person name="Takatsuka M."/>
            <person name="Osada-Oka M."/>
            <person name="Satoh E.F."/>
            <person name="Kitadokoro K."/>
            <person name="Nishiuchi Y."/>
            <person name="Niki M."/>
            <person name="Inoue M."/>
            <person name="Iwai K."/>
            <person name="Arakawa T."/>
            <person name="Shimoji Y."/>
            <person name="Ogura H."/>
            <person name="Kobayashi K."/>
            <person name="Rambukkana A."/>
            <person name="Matsumoto S."/>
        </authorList>
    </citation>
    <scope>FUNCTION</scope>
    <scope>CATALYTIC ACTIVITY</scope>
    <scope>BIOPHYSICOCHEMICAL PROPERTIES</scope>
    <scope>FE(3+)-BINDING</scope>
</reference>